<accession>B5EZ54</accession>
<sequence length="246" mass="27539">MTNNAAAPLYSLRGLPLIGWRDMSHALNYLFADGQLKQGTLVAINAEKLLTAEDNPEVRALIAAAEFKYADGISVVRSIRKKFPQAQVSRVAGADLWEALMARAGKEGTPVFLVGGKPEVLAQTEAKLRTQWNVNIVGSQDGYFTPEQRQALFARIHASGAKIVTVAMGSPKQELLMRDCREVHPHALYMGVGGTYDVFTGHVKRAPKIWQNLGLEWLYRLLSQPKRITRQVRLLRYLRWHYTGDL</sequence>
<gene>
    <name evidence="1" type="primary">wecG</name>
    <name evidence="1" type="synonym">rffM</name>
    <name type="ordered locus">SeAg_B4155</name>
</gene>
<proteinExistence type="inferred from homology"/>
<reference key="1">
    <citation type="journal article" date="2011" name="J. Bacteriol.">
        <title>Comparative genomics of 28 Salmonella enterica isolates: evidence for CRISPR-mediated adaptive sublineage evolution.</title>
        <authorList>
            <person name="Fricke W.F."/>
            <person name="Mammel M.K."/>
            <person name="McDermott P.F."/>
            <person name="Tartera C."/>
            <person name="White D.G."/>
            <person name="Leclerc J.E."/>
            <person name="Ravel J."/>
            <person name="Cebula T.A."/>
        </authorList>
    </citation>
    <scope>NUCLEOTIDE SEQUENCE [LARGE SCALE GENOMIC DNA]</scope>
    <source>
        <strain>SL483</strain>
    </source>
</reference>
<keyword id="KW-0328">Glycosyltransferase</keyword>
<keyword id="KW-0808">Transferase</keyword>
<evidence type="ECO:0000255" key="1">
    <source>
        <dbReference type="HAMAP-Rule" id="MF_01001"/>
    </source>
</evidence>
<organism>
    <name type="scientific">Salmonella agona (strain SL483)</name>
    <dbReference type="NCBI Taxonomy" id="454166"/>
    <lineage>
        <taxon>Bacteria</taxon>
        <taxon>Pseudomonadati</taxon>
        <taxon>Pseudomonadota</taxon>
        <taxon>Gammaproteobacteria</taxon>
        <taxon>Enterobacterales</taxon>
        <taxon>Enterobacteriaceae</taxon>
        <taxon>Salmonella</taxon>
    </lineage>
</organism>
<comment type="function">
    <text evidence="1">Catalyzes the synthesis of Und-PP-GlcNAc-ManNAcA (Lipid II), the second lipid-linked intermediate involved in enterobacterial common antigen (ECA) synthesis.</text>
</comment>
<comment type="catalytic activity">
    <reaction evidence="1">
        <text>UDP-N-acetyl-alpha-D-mannosaminouronate + N-acetyl-alpha-D-glucosaminyl-di-trans,octa-cis-undecaprenyl diphosphate = beta-D-ManNAcA-(1-&gt;4)-alpha-D-GlcNAc-di-trans,octa-cis-undecaprenyl diphosphate + UDP + H(+)</text>
        <dbReference type="Rhea" id="RHEA:28366"/>
        <dbReference type="ChEBI" id="CHEBI:15378"/>
        <dbReference type="ChEBI" id="CHEBI:58223"/>
        <dbReference type="ChEBI" id="CHEBI:61495"/>
        <dbReference type="ChEBI" id="CHEBI:62959"/>
        <dbReference type="ChEBI" id="CHEBI:70731"/>
        <dbReference type="EC" id="2.4.1.180"/>
    </reaction>
</comment>
<comment type="pathway">
    <text evidence="1">Bacterial outer membrane biogenesis; enterobacterial common antigen biosynthesis.</text>
</comment>
<comment type="similarity">
    <text evidence="1">Belongs to the glycosyltransferase 26 family.</text>
</comment>
<dbReference type="EC" id="2.4.1.180" evidence="1"/>
<dbReference type="EMBL" id="CP001138">
    <property type="protein sequence ID" value="ACH50049.1"/>
    <property type="molecule type" value="Genomic_DNA"/>
</dbReference>
<dbReference type="RefSeq" id="WP_000183620.1">
    <property type="nucleotide sequence ID" value="NC_011149.1"/>
</dbReference>
<dbReference type="SMR" id="B5EZ54"/>
<dbReference type="CAZy" id="GT26">
    <property type="family name" value="Glycosyltransferase Family 26"/>
</dbReference>
<dbReference type="KEGG" id="sea:SeAg_B4155"/>
<dbReference type="HOGENOM" id="CLU_063203_3_2_6"/>
<dbReference type="UniPathway" id="UPA00566"/>
<dbReference type="Proteomes" id="UP000008819">
    <property type="component" value="Chromosome"/>
</dbReference>
<dbReference type="GO" id="GO:0047241">
    <property type="term" value="F:lipopolysaccharide N-acetylmannosaminouronosyltransferase activity"/>
    <property type="evidence" value="ECO:0007669"/>
    <property type="project" value="UniProtKB-UniRule"/>
</dbReference>
<dbReference type="GO" id="GO:0009246">
    <property type="term" value="P:enterobacterial common antigen biosynthetic process"/>
    <property type="evidence" value="ECO:0007669"/>
    <property type="project" value="UniProtKB-UniRule"/>
</dbReference>
<dbReference type="CDD" id="cd06533">
    <property type="entry name" value="Glyco_transf_WecG_TagA"/>
    <property type="match status" value="1"/>
</dbReference>
<dbReference type="HAMAP" id="MF_01001">
    <property type="entry name" value="WecG_RffM"/>
    <property type="match status" value="1"/>
</dbReference>
<dbReference type="InterPro" id="IPR023085">
    <property type="entry name" value="UDP-ManNAcA_Trfase_WecG"/>
</dbReference>
<dbReference type="InterPro" id="IPR004629">
    <property type="entry name" value="WecG_TagA_CpsF"/>
</dbReference>
<dbReference type="NCBIfam" id="NF002980">
    <property type="entry name" value="PRK03692.1"/>
    <property type="match status" value="1"/>
</dbReference>
<dbReference type="NCBIfam" id="TIGR00696">
    <property type="entry name" value="wecG_tagA_cpsF"/>
    <property type="match status" value="1"/>
</dbReference>
<dbReference type="PANTHER" id="PTHR34136">
    <property type="match status" value="1"/>
</dbReference>
<dbReference type="PANTHER" id="PTHR34136:SF1">
    <property type="entry name" value="UDP-N-ACETYL-D-MANNOSAMINURONIC ACID TRANSFERASE"/>
    <property type="match status" value="1"/>
</dbReference>
<dbReference type="Pfam" id="PF03808">
    <property type="entry name" value="Glyco_tran_WecG"/>
    <property type="match status" value="1"/>
</dbReference>
<protein>
    <recommendedName>
        <fullName evidence="1">UDP-N-acetyl-D-mannosaminuronic acid transferase</fullName>
        <shortName evidence="1">UDP-ManNAcA transferase</shortName>
        <ecNumber evidence="1">2.4.1.180</ecNumber>
    </recommendedName>
</protein>
<name>WECG_SALA4</name>
<feature type="chain" id="PRO_1000134582" description="UDP-N-acetyl-D-mannosaminuronic acid transferase">
    <location>
        <begin position="1"/>
        <end position="246"/>
    </location>
</feature>